<reference key="1">
    <citation type="submission" date="2007-09" db="EMBL/GenBank/DDBJ databases">
        <title>Complete genome sequencing of Rickettsia bellii.</title>
        <authorList>
            <person name="Madan A."/>
            <person name="Lee H."/>
            <person name="Madan A."/>
            <person name="Yoon J.-G."/>
            <person name="Ryu G.-Y."/>
            <person name="Dasch G."/>
            <person name="Ereemeva M."/>
        </authorList>
    </citation>
    <scope>NUCLEOTIDE SEQUENCE [LARGE SCALE GENOMIC DNA]</scope>
    <source>
        <strain>OSU 85-389</strain>
    </source>
</reference>
<accession>A8GVN8</accession>
<protein>
    <recommendedName>
        <fullName evidence="1">Protoheme IX farnesyltransferase</fullName>
        <ecNumber evidence="1">2.5.1.141</ecNumber>
    </recommendedName>
    <alternativeName>
        <fullName evidence="1">Heme B farnesyltransferase</fullName>
    </alternativeName>
    <alternativeName>
        <fullName evidence="1">Heme O synthase</fullName>
    </alternativeName>
</protein>
<dbReference type="EC" id="2.5.1.141" evidence="1"/>
<dbReference type="EMBL" id="CP000849">
    <property type="protein sequence ID" value="ABV78915.1"/>
    <property type="molecule type" value="Genomic_DNA"/>
</dbReference>
<dbReference type="SMR" id="A8GVN8"/>
<dbReference type="KEGG" id="rbo:A1I_02720"/>
<dbReference type="HOGENOM" id="CLU_029631_0_2_5"/>
<dbReference type="UniPathway" id="UPA00834">
    <property type="reaction ID" value="UER00712"/>
</dbReference>
<dbReference type="GO" id="GO:0005886">
    <property type="term" value="C:plasma membrane"/>
    <property type="evidence" value="ECO:0007669"/>
    <property type="project" value="UniProtKB-SubCell"/>
</dbReference>
<dbReference type="GO" id="GO:0008495">
    <property type="term" value="F:protoheme IX farnesyltransferase activity"/>
    <property type="evidence" value="ECO:0007669"/>
    <property type="project" value="UniProtKB-UniRule"/>
</dbReference>
<dbReference type="GO" id="GO:0048034">
    <property type="term" value="P:heme O biosynthetic process"/>
    <property type="evidence" value="ECO:0007669"/>
    <property type="project" value="UniProtKB-UniRule"/>
</dbReference>
<dbReference type="CDD" id="cd13957">
    <property type="entry name" value="PT_UbiA_Cox10"/>
    <property type="match status" value="1"/>
</dbReference>
<dbReference type="FunFam" id="1.10.357.140:FF:000001">
    <property type="entry name" value="Protoheme IX farnesyltransferase"/>
    <property type="match status" value="1"/>
</dbReference>
<dbReference type="Gene3D" id="1.10.357.140">
    <property type="entry name" value="UbiA prenyltransferase"/>
    <property type="match status" value="1"/>
</dbReference>
<dbReference type="HAMAP" id="MF_00154">
    <property type="entry name" value="CyoE_CtaB"/>
    <property type="match status" value="1"/>
</dbReference>
<dbReference type="InterPro" id="IPR006369">
    <property type="entry name" value="Protohaem_IX_farnesylTrfase"/>
</dbReference>
<dbReference type="InterPro" id="IPR000537">
    <property type="entry name" value="UbiA_prenyltransferase"/>
</dbReference>
<dbReference type="InterPro" id="IPR030470">
    <property type="entry name" value="UbiA_prenylTrfase_CS"/>
</dbReference>
<dbReference type="InterPro" id="IPR044878">
    <property type="entry name" value="UbiA_sf"/>
</dbReference>
<dbReference type="NCBIfam" id="TIGR01473">
    <property type="entry name" value="cyoE_ctaB"/>
    <property type="match status" value="1"/>
</dbReference>
<dbReference type="NCBIfam" id="NF003349">
    <property type="entry name" value="PRK04375.1-2"/>
    <property type="match status" value="1"/>
</dbReference>
<dbReference type="PANTHER" id="PTHR43448:SF7">
    <property type="entry name" value="4-HYDROXYBENZOATE SOLANESYLTRANSFERASE"/>
    <property type="match status" value="1"/>
</dbReference>
<dbReference type="PANTHER" id="PTHR43448">
    <property type="entry name" value="PROTOHEME IX FARNESYLTRANSFERASE, MITOCHONDRIAL"/>
    <property type="match status" value="1"/>
</dbReference>
<dbReference type="Pfam" id="PF01040">
    <property type="entry name" value="UbiA"/>
    <property type="match status" value="1"/>
</dbReference>
<dbReference type="PROSITE" id="PS00943">
    <property type="entry name" value="UBIA"/>
    <property type="match status" value="1"/>
</dbReference>
<evidence type="ECO:0000255" key="1">
    <source>
        <dbReference type="HAMAP-Rule" id="MF_00154"/>
    </source>
</evidence>
<organism>
    <name type="scientific">Rickettsia bellii (strain OSU 85-389)</name>
    <dbReference type="NCBI Taxonomy" id="391896"/>
    <lineage>
        <taxon>Bacteria</taxon>
        <taxon>Pseudomonadati</taxon>
        <taxon>Pseudomonadota</taxon>
        <taxon>Alphaproteobacteria</taxon>
        <taxon>Rickettsiales</taxon>
        <taxon>Rickettsiaceae</taxon>
        <taxon>Rickettsieae</taxon>
        <taxon>Rickettsia</taxon>
        <taxon>belli group</taxon>
    </lineage>
</organism>
<gene>
    <name evidence="1" type="primary">ctaB</name>
    <name type="ordered locus">A1I_02720</name>
</gene>
<sequence>MNSLTKSINLDKVSYPQSTVKDYILLMKPRVMSLVVFTGFSGMWLAPNSLHPFISVIALICIAIGAGSAGAINMWYDRDIDALMKRTQKRPIVRGAIEADEALSFGLIMAFFSVFFMALCVNFLSALLLLFTIFYYICIYTMWLKRSSIQNIVIGGAAGALPPVIGYASVSGSVSLDSVILFLIIFIWTPPHSWALALFCNDDYKNCKVPMMPVIKGALYTKKQILIYSVLLFLTSLMPFFVGMSNIIYLVIAAVLGLVFLYYSISLFYDNADNKQAKRFFAYSIFYLFFIFLLLDFCRV</sequence>
<name>COXX_RICB8</name>
<feature type="chain" id="PRO_1000011355" description="Protoheme IX farnesyltransferase">
    <location>
        <begin position="1"/>
        <end position="300"/>
    </location>
</feature>
<feature type="transmembrane region" description="Helical" evidence="1">
    <location>
        <begin position="31"/>
        <end position="51"/>
    </location>
</feature>
<feature type="transmembrane region" description="Helical" evidence="1">
    <location>
        <begin position="52"/>
        <end position="72"/>
    </location>
</feature>
<feature type="transmembrane region" description="Helical" evidence="1">
    <location>
        <begin position="92"/>
        <end position="112"/>
    </location>
</feature>
<feature type="transmembrane region" description="Helical" evidence="1">
    <location>
        <begin position="123"/>
        <end position="145"/>
    </location>
</feature>
<feature type="transmembrane region" description="Helical" evidence="1">
    <location>
        <begin position="152"/>
        <end position="172"/>
    </location>
</feature>
<feature type="transmembrane region" description="Helical" evidence="1">
    <location>
        <begin position="179"/>
        <end position="199"/>
    </location>
</feature>
<feature type="transmembrane region" description="Helical" evidence="1">
    <location>
        <begin position="225"/>
        <end position="245"/>
    </location>
</feature>
<feature type="transmembrane region" description="Helical" evidence="1">
    <location>
        <begin position="247"/>
        <end position="267"/>
    </location>
</feature>
<feature type="transmembrane region" description="Helical" evidence="1">
    <location>
        <begin position="280"/>
        <end position="300"/>
    </location>
</feature>
<comment type="function">
    <text evidence="1">Converts heme B (protoheme IX) to heme O by substitution of the vinyl group on carbon 2 of heme B porphyrin ring with a hydroxyethyl farnesyl side group.</text>
</comment>
<comment type="catalytic activity">
    <reaction evidence="1">
        <text>heme b + (2E,6E)-farnesyl diphosphate + H2O = Fe(II)-heme o + diphosphate</text>
        <dbReference type="Rhea" id="RHEA:28070"/>
        <dbReference type="ChEBI" id="CHEBI:15377"/>
        <dbReference type="ChEBI" id="CHEBI:33019"/>
        <dbReference type="ChEBI" id="CHEBI:60344"/>
        <dbReference type="ChEBI" id="CHEBI:60530"/>
        <dbReference type="ChEBI" id="CHEBI:175763"/>
        <dbReference type="EC" id="2.5.1.141"/>
    </reaction>
</comment>
<comment type="pathway">
    <text evidence="1">Porphyrin-containing compound metabolism; heme O biosynthesis; heme O from protoheme: step 1/1.</text>
</comment>
<comment type="subcellular location">
    <subcellularLocation>
        <location evidence="1">Cell inner membrane</location>
        <topology evidence="1">Multi-pass membrane protein</topology>
    </subcellularLocation>
</comment>
<comment type="miscellaneous">
    <text evidence="1">Carbon 2 of the heme B porphyrin ring is defined according to the Fischer nomenclature.</text>
</comment>
<comment type="similarity">
    <text evidence="1">Belongs to the UbiA prenyltransferase family. Protoheme IX farnesyltransferase subfamily.</text>
</comment>
<proteinExistence type="inferred from homology"/>
<keyword id="KW-0997">Cell inner membrane</keyword>
<keyword id="KW-1003">Cell membrane</keyword>
<keyword id="KW-0350">Heme biosynthesis</keyword>
<keyword id="KW-0472">Membrane</keyword>
<keyword id="KW-0808">Transferase</keyword>
<keyword id="KW-0812">Transmembrane</keyword>
<keyword id="KW-1133">Transmembrane helix</keyword>